<evidence type="ECO:0000250" key="1"/>
<evidence type="ECO:0000255" key="2"/>
<evidence type="ECO:0000256" key="3">
    <source>
        <dbReference type="SAM" id="MobiDB-lite"/>
    </source>
</evidence>
<evidence type="ECO:0000305" key="4"/>
<feature type="chain" id="PRO_0000211442" description="Vacuolar-sorting protein SNF7">
    <location>
        <begin position="1"/>
        <end position="226"/>
    </location>
</feature>
<feature type="region of interest" description="Disordered" evidence="3">
    <location>
        <begin position="197"/>
        <end position="216"/>
    </location>
</feature>
<feature type="coiled-coil region" evidence="2">
    <location>
        <begin position="24"/>
        <end position="226"/>
    </location>
</feature>
<comment type="function">
    <text evidence="1">Required for the sorting and concentration of proteins resulting in the entry of these proteins into the invaginating vesicles of the multivesicular body (MVB). Also required for the proteolytic cleavage of the transcription factor RIM101 in response to alkaline ambient pH (By similarity).</text>
</comment>
<comment type="subunit">
    <text evidence="1">A component of the endosomal sorting required for transport complex III (ESCRT-III).</text>
</comment>
<comment type="subcellular location">
    <subcellularLocation>
        <location evidence="1">Cytoplasm</location>
    </subcellularLocation>
    <subcellularLocation>
        <location evidence="1">Endosome membrane</location>
        <topology evidence="1">Peripheral membrane protein</topology>
    </subcellularLocation>
</comment>
<comment type="similarity">
    <text evidence="4">Belongs to the SNF7 family.</text>
</comment>
<accession>P0C149</accession>
<accession>A4R525</accession>
<accession>G4NGL5</accession>
<reference key="1">
    <citation type="journal article" date="2005" name="Nature">
        <title>The genome sequence of the rice blast fungus Magnaporthe grisea.</title>
        <authorList>
            <person name="Dean R.A."/>
            <person name="Talbot N.J."/>
            <person name="Ebbole D.J."/>
            <person name="Farman M.L."/>
            <person name="Mitchell T.K."/>
            <person name="Orbach M.J."/>
            <person name="Thon M.R."/>
            <person name="Kulkarni R."/>
            <person name="Xu J.-R."/>
            <person name="Pan H."/>
            <person name="Read N.D."/>
            <person name="Lee Y.-H."/>
            <person name="Carbone I."/>
            <person name="Brown D."/>
            <person name="Oh Y.Y."/>
            <person name="Donofrio N."/>
            <person name="Jeong J.S."/>
            <person name="Soanes D.M."/>
            <person name="Djonovic S."/>
            <person name="Kolomiets E."/>
            <person name="Rehmeyer C."/>
            <person name="Li W."/>
            <person name="Harding M."/>
            <person name="Kim S."/>
            <person name="Lebrun M.-H."/>
            <person name="Bohnert H."/>
            <person name="Coughlan S."/>
            <person name="Butler J."/>
            <person name="Calvo S.E."/>
            <person name="Ma L.-J."/>
            <person name="Nicol R."/>
            <person name="Purcell S."/>
            <person name="Nusbaum C."/>
            <person name="Galagan J.E."/>
            <person name="Birren B.W."/>
        </authorList>
    </citation>
    <scope>NUCLEOTIDE SEQUENCE [LARGE SCALE GENOMIC DNA]</scope>
    <source>
        <strain>70-15 / ATCC MYA-4617 / FGSC 8958</strain>
    </source>
</reference>
<dbReference type="EMBL" id="CM001236">
    <property type="protein sequence ID" value="EHA47375.1"/>
    <property type="molecule type" value="Genomic_DNA"/>
</dbReference>
<dbReference type="RefSeq" id="XP_003719742.1">
    <property type="nucleotide sequence ID" value="XM_003719694.1"/>
</dbReference>
<dbReference type="SMR" id="P0C149"/>
<dbReference type="FunCoup" id="P0C149">
    <property type="interactions" value="633"/>
</dbReference>
<dbReference type="STRING" id="242507.P0C149"/>
<dbReference type="EnsemblFungi" id="MGG_04095T0">
    <property type="protein sequence ID" value="MGG_04095T0"/>
    <property type="gene ID" value="MGG_04095"/>
</dbReference>
<dbReference type="GeneID" id="2677595"/>
<dbReference type="KEGG" id="mgr:MGG_04095"/>
<dbReference type="VEuPathDB" id="FungiDB:MGG_04095"/>
<dbReference type="eggNOG" id="KOG1656">
    <property type="taxonomic scope" value="Eukaryota"/>
</dbReference>
<dbReference type="HOGENOM" id="CLU_071097_1_0_1"/>
<dbReference type="InParanoid" id="P0C149"/>
<dbReference type="OMA" id="MKQIHGG"/>
<dbReference type="OrthoDB" id="5592979at2759"/>
<dbReference type="Proteomes" id="UP000009058">
    <property type="component" value="Chromosome 6"/>
</dbReference>
<dbReference type="GO" id="GO:0009898">
    <property type="term" value="C:cytoplasmic side of plasma membrane"/>
    <property type="evidence" value="ECO:0007669"/>
    <property type="project" value="TreeGrafter"/>
</dbReference>
<dbReference type="GO" id="GO:0005829">
    <property type="term" value="C:cytosol"/>
    <property type="evidence" value="ECO:0007669"/>
    <property type="project" value="EnsemblFungi"/>
</dbReference>
<dbReference type="GO" id="GO:0000815">
    <property type="term" value="C:ESCRT III complex"/>
    <property type="evidence" value="ECO:0007669"/>
    <property type="project" value="EnsemblFungi"/>
</dbReference>
<dbReference type="GO" id="GO:0005771">
    <property type="term" value="C:multivesicular body"/>
    <property type="evidence" value="ECO:0007669"/>
    <property type="project" value="TreeGrafter"/>
</dbReference>
<dbReference type="GO" id="GO:0042802">
    <property type="term" value="F:identical protein binding"/>
    <property type="evidence" value="ECO:0007669"/>
    <property type="project" value="EnsemblFungi"/>
</dbReference>
<dbReference type="GO" id="GO:1904669">
    <property type="term" value="P:ATP export"/>
    <property type="evidence" value="ECO:0007669"/>
    <property type="project" value="EnsemblFungi"/>
</dbReference>
<dbReference type="GO" id="GO:0070676">
    <property type="term" value="P:intralumenal vesicle formation"/>
    <property type="evidence" value="ECO:0007669"/>
    <property type="project" value="EnsemblFungi"/>
</dbReference>
<dbReference type="GO" id="GO:0007031">
    <property type="term" value="P:peroxisome organization"/>
    <property type="evidence" value="ECO:0007669"/>
    <property type="project" value="EnsemblFungi"/>
</dbReference>
<dbReference type="GO" id="GO:0043328">
    <property type="term" value="P:protein transport to vacuole involved in ubiquitin-dependent protein catabolic process via the multivesicular body sorting pathway"/>
    <property type="evidence" value="ECO:0007669"/>
    <property type="project" value="EnsemblFungi"/>
</dbReference>
<dbReference type="GO" id="GO:0061709">
    <property type="term" value="P:reticulophagy"/>
    <property type="evidence" value="ECO:0007669"/>
    <property type="project" value="EnsemblFungi"/>
</dbReference>
<dbReference type="Gene3D" id="1.10.287.1060">
    <property type="entry name" value="ESAT-6-like"/>
    <property type="match status" value="1"/>
</dbReference>
<dbReference type="InterPro" id="IPR005024">
    <property type="entry name" value="Snf7_fam"/>
</dbReference>
<dbReference type="PANTHER" id="PTHR22761">
    <property type="entry name" value="CHARGED MULTIVESICULAR BODY PROTEIN"/>
    <property type="match status" value="1"/>
</dbReference>
<dbReference type="PANTHER" id="PTHR22761:SF10">
    <property type="entry name" value="GH13992P"/>
    <property type="match status" value="1"/>
</dbReference>
<dbReference type="Pfam" id="PF03357">
    <property type="entry name" value="Snf7"/>
    <property type="match status" value="1"/>
</dbReference>
<name>SNF7_PYRO7</name>
<proteinExistence type="inferred from homology"/>
<gene>
    <name type="primary">SNF7</name>
    <name type="synonym">VPS32</name>
    <name type="ORF">MGG_04095</name>
</gene>
<organism>
    <name type="scientific">Pyricularia oryzae (strain 70-15 / ATCC MYA-4617 / FGSC 8958)</name>
    <name type="common">Rice blast fungus</name>
    <name type="synonym">Magnaporthe oryzae</name>
    <dbReference type="NCBI Taxonomy" id="242507"/>
    <lineage>
        <taxon>Eukaryota</taxon>
        <taxon>Fungi</taxon>
        <taxon>Dikarya</taxon>
        <taxon>Ascomycota</taxon>
        <taxon>Pezizomycotina</taxon>
        <taxon>Sordariomycetes</taxon>
        <taxon>Sordariomycetidae</taxon>
        <taxon>Magnaporthales</taxon>
        <taxon>Pyriculariaceae</taxon>
        <taxon>Pyricularia</taxon>
    </lineage>
</organism>
<protein>
    <recommendedName>
        <fullName>Vacuolar-sorting protein SNF7</fullName>
    </recommendedName>
    <alternativeName>
        <fullName>Vacuolar protein-sorting-associated protein 32</fullName>
    </alternativeName>
</protein>
<keyword id="KW-0175">Coiled coil</keyword>
<keyword id="KW-0963">Cytoplasm</keyword>
<keyword id="KW-0967">Endosome</keyword>
<keyword id="KW-0472">Membrane</keyword>
<keyword id="KW-1185">Reference proteome</keyword>
<sequence length="226" mass="25057">MSGVWGWFGGNAAQRRKDTPKNAILGLRSQLDMLQKREKHLQNQISEQDAIARKNISTNKNAAKAALKRKKTHEHSLDQTLSQIGTLEQQINAIESANINMETLEAMKKAGKAMEDIHGKLTVEKVDETMDKLREQNALSEEIVNAITNNQLGNEAIDDADLEDELEAMEQEQLDEKILKTGTGPVSDAIQRLPAAANGELKGKATTVEEDDEEAELRKLQAEMAM</sequence>